<sequence length="600" mass="65619">MAKEIILGIDLGTTNSVVAIIENQKPVVLENPNGKRTTPSVVAFKNNEEIVGDAAKRQLETNPEAIASIKRLMGTDKTVRANERDYKPEEISAKILAYLKEYAEKKIGHKVTKAVITVPAYFDNAQREATKNAGKIAGLQVERIINEPTAAALAFGLDKTEKEMKVLVYDLGGGTFDVSVLELSGGTFEVLSTSGDNHLGGDDWDNEIVNWLVKKIKEEYDFDPKSDKMALTRLKEEAEKTKINLSNQSVSTVSLPFLGMGKNGPINVELELKRSEFEKMTAHLIDRTRKPIVDALKQAKIEASDLDEVLLVGGSTRMPAVQSMIEHTLNKKPNRSINPDEVVAIGAAIQGGVLAGEISDVLLLDVTPLTLGIETLGGIATPLIPRNTTIPVTKSQIFSTAEDNQTEVTISVVQGERQLAADNKMLGRFNLSGIEAAPRGLPQIEVSFSIDVNGITTVSAKDKKTGKEQTITIKNTSTLSEEEINKMIQEAEENREADALKKDKIETTVRAEGLINQLEKSITDQGEKIDPKQKELLEKQIQELKDLLKEEKTDELKLKLDQIEAAAQSFAQATAQQANTSESDPKADDSNTIDAEIKQD</sequence>
<proteinExistence type="inferred from homology"/>
<feature type="chain" id="PRO_0000225979" description="Chaperone protein DnaK">
    <location>
        <begin position="1"/>
        <end position="600"/>
    </location>
</feature>
<feature type="region of interest" description="Disordered" evidence="2">
    <location>
        <begin position="569"/>
        <end position="600"/>
    </location>
</feature>
<feature type="compositionally biased region" description="Low complexity" evidence="2">
    <location>
        <begin position="569"/>
        <end position="578"/>
    </location>
</feature>
<feature type="compositionally biased region" description="Basic and acidic residues" evidence="2">
    <location>
        <begin position="583"/>
        <end position="600"/>
    </location>
</feature>
<feature type="modified residue" description="Phosphothreonine; by autocatalysis" evidence="1">
    <location>
        <position position="175"/>
    </location>
</feature>
<protein>
    <recommendedName>
        <fullName evidence="1">Chaperone protein DnaK</fullName>
    </recommendedName>
    <alternativeName>
        <fullName evidence="1">HSP70</fullName>
    </alternativeName>
    <alternativeName>
        <fullName evidence="1">Heat shock 70 kDa protein</fullName>
    </alternativeName>
    <alternativeName>
        <fullName evidence="1">Heat shock protein 70</fullName>
    </alternativeName>
</protein>
<gene>
    <name evidence="1" type="primary">dnaK</name>
    <name type="ordered locus">MHP7448_0067</name>
</gene>
<dbReference type="EMBL" id="AE017244">
    <property type="protein sequence ID" value="AAZ53444.1"/>
    <property type="molecule type" value="Genomic_DNA"/>
</dbReference>
<dbReference type="RefSeq" id="WP_011289986.1">
    <property type="nucleotide sequence ID" value="NC_007332.1"/>
</dbReference>
<dbReference type="SMR" id="Q4A8U5"/>
<dbReference type="KEGG" id="mhp:MHP7448_0067"/>
<dbReference type="HOGENOM" id="CLU_005965_2_4_14"/>
<dbReference type="Proteomes" id="UP000000553">
    <property type="component" value="Chromosome"/>
</dbReference>
<dbReference type="GO" id="GO:0005524">
    <property type="term" value="F:ATP binding"/>
    <property type="evidence" value="ECO:0007669"/>
    <property type="project" value="UniProtKB-UniRule"/>
</dbReference>
<dbReference type="GO" id="GO:0140662">
    <property type="term" value="F:ATP-dependent protein folding chaperone"/>
    <property type="evidence" value="ECO:0007669"/>
    <property type="project" value="InterPro"/>
</dbReference>
<dbReference type="GO" id="GO:0051082">
    <property type="term" value="F:unfolded protein binding"/>
    <property type="evidence" value="ECO:0007669"/>
    <property type="project" value="InterPro"/>
</dbReference>
<dbReference type="CDD" id="cd10234">
    <property type="entry name" value="ASKHA_NBD_HSP70_DnaK-like"/>
    <property type="match status" value="1"/>
</dbReference>
<dbReference type="FunFam" id="2.60.34.10:FF:000014">
    <property type="entry name" value="Chaperone protein DnaK HSP70"/>
    <property type="match status" value="1"/>
</dbReference>
<dbReference type="FunFam" id="3.30.420.40:FF:000071">
    <property type="entry name" value="Molecular chaperone DnaK"/>
    <property type="match status" value="1"/>
</dbReference>
<dbReference type="FunFam" id="3.90.640.10:FF:000003">
    <property type="entry name" value="Molecular chaperone DnaK"/>
    <property type="match status" value="1"/>
</dbReference>
<dbReference type="Gene3D" id="1.20.1270.10">
    <property type="match status" value="1"/>
</dbReference>
<dbReference type="Gene3D" id="3.30.420.40">
    <property type="match status" value="2"/>
</dbReference>
<dbReference type="Gene3D" id="3.90.640.10">
    <property type="entry name" value="Actin, Chain A, domain 4"/>
    <property type="match status" value="1"/>
</dbReference>
<dbReference type="Gene3D" id="2.60.34.10">
    <property type="entry name" value="Substrate Binding Domain Of DNAk, Chain A, domain 1"/>
    <property type="match status" value="1"/>
</dbReference>
<dbReference type="HAMAP" id="MF_00332">
    <property type="entry name" value="DnaK"/>
    <property type="match status" value="1"/>
</dbReference>
<dbReference type="InterPro" id="IPR043129">
    <property type="entry name" value="ATPase_NBD"/>
</dbReference>
<dbReference type="InterPro" id="IPR012725">
    <property type="entry name" value="Chaperone_DnaK"/>
</dbReference>
<dbReference type="InterPro" id="IPR018181">
    <property type="entry name" value="Heat_shock_70_CS"/>
</dbReference>
<dbReference type="InterPro" id="IPR029048">
    <property type="entry name" value="HSP70_C_sf"/>
</dbReference>
<dbReference type="InterPro" id="IPR029047">
    <property type="entry name" value="HSP70_peptide-bd_sf"/>
</dbReference>
<dbReference type="InterPro" id="IPR013126">
    <property type="entry name" value="Hsp_70_fam"/>
</dbReference>
<dbReference type="NCBIfam" id="NF001413">
    <property type="entry name" value="PRK00290.1"/>
    <property type="match status" value="1"/>
</dbReference>
<dbReference type="NCBIfam" id="TIGR02350">
    <property type="entry name" value="prok_dnaK"/>
    <property type="match status" value="1"/>
</dbReference>
<dbReference type="PANTHER" id="PTHR19375">
    <property type="entry name" value="HEAT SHOCK PROTEIN 70KDA"/>
    <property type="match status" value="1"/>
</dbReference>
<dbReference type="Pfam" id="PF00012">
    <property type="entry name" value="HSP70"/>
    <property type="match status" value="1"/>
</dbReference>
<dbReference type="PRINTS" id="PR00301">
    <property type="entry name" value="HEATSHOCK70"/>
</dbReference>
<dbReference type="SUPFAM" id="SSF53067">
    <property type="entry name" value="Actin-like ATPase domain"/>
    <property type="match status" value="2"/>
</dbReference>
<dbReference type="SUPFAM" id="SSF100934">
    <property type="entry name" value="Heat shock protein 70kD (HSP70), C-terminal subdomain"/>
    <property type="match status" value="1"/>
</dbReference>
<dbReference type="SUPFAM" id="SSF100920">
    <property type="entry name" value="Heat shock protein 70kD (HSP70), peptide-binding domain"/>
    <property type="match status" value="1"/>
</dbReference>
<dbReference type="PROSITE" id="PS00297">
    <property type="entry name" value="HSP70_1"/>
    <property type="match status" value="1"/>
</dbReference>
<dbReference type="PROSITE" id="PS00329">
    <property type="entry name" value="HSP70_2"/>
    <property type="match status" value="1"/>
</dbReference>
<dbReference type="PROSITE" id="PS01036">
    <property type="entry name" value="HSP70_3"/>
    <property type="match status" value="1"/>
</dbReference>
<organism>
    <name type="scientific">Mesomycoplasma hyopneumoniae (strain 7448)</name>
    <name type="common">Mycoplasma hyopneumoniae</name>
    <dbReference type="NCBI Taxonomy" id="262722"/>
    <lineage>
        <taxon>Bacteria</taxon>
        <taxon>Bacillati</taxon>
        <taxon>Mycoplasmatota</taxon>
        <taxon>Mycoplasmoidales</taxon>
        <taxon>Metamycoplasmataceae</taxon>
        <taxon>Mesomycoplasma</taxon>
    </lineage>
</organism>
<name>DNAK_MESH7</name>
<keyword id="KW-0067">ATP-binding</keyword>
<keyword id="KW-0143">Chaperone</keyword>
<keyword id="KW-0547">Nucleotide-binding</keyword>
<keyword id="KW-0597">Phosphoprotein</keyword>
<keyword id="KW-0346">Stress response</keyword>
<comment type="function">
    <text evidence="1">Acts as a chaperone.</text>
</comment>
<comment type="induction">
    <text evidence="1">By stress conditions e.g. heat shock.</text>
</comment>
<comment type="similarity">
    <text evidence="1">Belongs to the heat shock protein 70 family.</text>
</comment>
<reference key="1">
    <citation type="journal article" date="2005" name="J. Bacteriol.">
        <title>Swine and poultry pathogens: the complete genome sequences of two strains of Mycoplasma hyopneumoniae and a strain of Mycoplasma synoviae.</title>
        <authorList>
            <person name="Vasconcelos A.T.R."/>
            <person name="Ferreira H.B."/>
            <person name="Bizarro C.V."/>
            <person name="Bonatto S.L."/>
            <person name="Carvalho M.O."/>
            <person name="Pinto P.M."/>
            <person name="Almeida D.F."/>
            <person name="Almeida L.G.P."/>
            <person name="Almeida R."/>
            <person name="Alves-Junior L."/>
            <person name="Assuncao E.N."/>
            <person name="Azevedo V.A.C."/>
            <person name="Bogo M.R."/>
            <person name="Brigido M.M."/>
            <person name="Brocchi M."/>
            <person name="Burity H.A."/>
            <person name="Camargo A.A."/>
            <person name="Camargo S.S."/>
            <person name="Carepo M.S."/>
            <person name="Carraro D.M."/>
            <person name="de Mattos Cascardo J.C."/>
            <person name="Castro L.A."/>
            <person name="Cavalcanti G."/>
            <person name="Chemale G."/>
            <person name="Collevatti R.G."/>
            <person name="Cunha C.W."/>
            <person name="Dallagiovanna B."/>
            <person name="Dambros B.P."/>
            <person name="Dellagostin O.A."/>
            <person name="Falcao C."/>
            <person name="Fantinatti-Garboggini F."/>
            <person name="Felipe M.S.S."/>
            <person name="Fiorentin L."/>
            <person name="Franco G.R."/>
            <person name="Freitas N.S.A."/>
            <person name="Frias D."/>
            <person name="Grangeiro T.B."/>
            <person name="Grisard E.C."/>
            <person name="Guimaraes C.T."/>
            <person name="Hungria M."/>
            <person name="Jardim S.N."/>
            <person name="Krieger M.A."/>
            <person name="Laurino J.P."/>
            <person name="Lima L.F.A."/>
            <person name="Lopes M.I."/>
            <person name="Loreto E.L.S."/>
            <person name="Madeira H.M.F."/>
            <person name="Manfio G.P."/>
            <person name="Maranhao A.Q."/>
            <person name="Martinkovics C.T."/>
            <person name="Medeiros S.R.B."/>
            <person name="Moreira M.A.M."/>
            <person name="Neiva M."/>
            <person name="Ramalho-Neto C.E."/>
            <person name="Nicolas M.F."/>
            <person name="Oliveira S.C."/>
            <person name="Paixao R.F.C."/>
            <person name="Pedrosa F.O."/>
            <person name="Pena S.D.J."/>
            <person name="Pereira M."/>
            <person name="Pereira-Ferrari L."/>
            <person name="Piffer I."/>
            <person name="Pinto L.S."/>
            <person name="Potrich D.P."/>
            <person name="Salim A.C.M."/>
            <person name="Santos F.R."/>
            <person name="Schmitt R."/>
            <person name="Schneider M.P.C."/>
            <person name="Schrank A."/>
            <person name="Schrank I.S."/>
            <person name="Schuck A.F."/>
            <person name="Seuanez H.N."/>
            <person name="Silva D.W."/>
            <person name="Silva R."/>
            <person name="Silva S.C."/>
            <person name="Soares C.M.A."/>
            <person name="Souza K.R.L."/>
            <person name="Souza R.C."/>
            <person name="Staats C.C."/>
            <person name="Steffens M.B.R."/>
            <person name="Teixeira S.M.R."/>
            <person name="Urmenyi T.P."/>
            <person name="Vainstein M.H."/>
            <person name="Zuccherato L.W."/>
            <person name="Simpson A.J.G."/>
            <person name="Zaha A."/>
        </authorList>
    </citation>
    <scope>NUCLEOTIDE SEQUENCE [LARGE SCALE GENOMIC DNA]</scope>
    <source>
        <strain>7448</strain>
    </source>
</reference>
<accession>Q4A8U5</accession>
<evidence type="ECO:0000255" key="1">
    <source>
        <dbReference type="HAMAP-Rule" id="MF_00332"/>
    </source>
</evidence>
<evidence type="ECO:0000256" key="2">
    <source>
        <dbReference type="SAM" id="MobiDB-lite"/>
    </source>
</evidence>